<organism>
    <name type="scientific">Leptospira borgpetersenii serovar Hardjo-bovis (strain L550)</name>
    <dbReference type="NCBI Taxonomy" id="355276"/>
    <lineage>
        <taxon>Bacteria</taxon>
        <taxon>Pseudomonadati</taxon>
        <taxon>Spirochaetota</taxon>
        <taxon>Spirochaetia</taxon>
        <taxon>Leptospirales</taxon>
        <taxon>Leptospiraceae</taxon>
        <taxon>Leptospira</taxon>
    </lineage>
</organism>
<feature type="chain" id="PRO_1000089463" description="Octanoyltransferase">
    <location>
        <begin position="1"/>
        <end position="219"/>
    </location>
</feature>
<feature type="domain" description="BPL/LPL catalytic" evidence="2">
    <location>
        <begin position="24"/>
        <end position="212"/>
    </location>
</feature>
<feature type="active site" description="Acyl-thioester intermediate" evidence="1">
    <location>
        <position position="171"/>
    </location>
</feature>
<feature type="binding site" evidence="1">
    <location>
        <begin position="69"/>
        <end position="76"/>
    </location>
    <ligand>
        <name>substrate</name>
    </ligand>
</feature>
<feature type="binding site" evidence="1">
    <location>
        <begin position="140"/>
        <end position="142"/>
    </location>
    <ligand>
        <name>substrate</name>
    </ligand>
</feature>
<feature type="binding site" evidence="1">
    <location>
        <begin position="153"/>
        <end position="155"/>
    </location>
    <ligand>
        <name>substrate</name>
    </ligand>
</feature>
<feature type="site" description="Lowers pKa of active site Cys" evidence="1">
    <location>
        <position position="137"/>
    </location>
</feature>
<reference key="1">
    <citation type="journal article" date="2006" name="Proc. Natl. Acad. Sci. U.S.A.">
        <title>Genome reduction in Leptospira borgpetersenii reflects limited transmission potential.</title>
        <authorList>
            <person name="Bulach D.M."/>
            <person name="Zuerner R.L."/>
            <person name="Wilson P."/>
            <person name="Seemann T."/>
            <person name="McGrath A."/>
            <person name="Cullen P.A."/>
            <person name="Davis J."/>
            <person name="Johnson M."/>
            <person name="Kuczek E."/>
            <person name="Alt D.P."/>
            <person name="Peterson-Burch B."/>
            <person name="Coppel R.L."/>
            <person name="Rood J.I."/>
            <person name="Davies J.K."/>
            <person name="Adler B."/>
        </authorList>
    </citation>
    <scope>NUCLEOTIDE SEQUENCE [LARGE SCALE GENOMIC DNA]</scope>
    <source>
        <strain>L550</strain>
    </source>
</reference>
<protein>
    <recommendedName>
        <fullName evidence="1">Octanoyltransferase</fullName>
        <ecNumber evidence="1">2.3.1.181</ecNumber>
    </recommendedName>
    <alternativeName>
        <fullName evidence="1">Lipoate-protein ligase B</fullName>
    </alternativeName>
    <alternativeName>
        <fullName evidence="1">Lipoyl/octanoyl transferase</fullName>
    </alternativeName>
    <alternativeName>
        <fullName evidence="1">Octanoyl-[acyl-carrier-protein]-protein N-octanoyltransferase</fullName>
    </alternativeName>
</protein>
<comment type="function">
    <text evidence="1">Catalyzes the transfer of endogenously produced octanoic acid from octanoyl-acyl-carrier-protein onto the lipoyl domains of lipoate-dependent enzymes. Lipoyl-ACP can also act as a substrate although octanoyl-ACP is likely to be the physiological substrate.</text>
</comment>
<comment type="catalytic activity">
    <reaction evidence="1">
        <text>octanoyl-[ACP] + L-lysyl-[protein] = N(6)-octanoyl-L-lysyl-[protein] + holo-[ACP] + H(+)</text>
        <dbReference type="Rhea" id="RHEA:17665"/>
        <dbReference type="Rhea" id="RHEA-COMP:9636"/>
        <dbReference type="Rhea" id="RHEA-COMP:9685"/>
        <dbReference type="Rhea" id="RHEA-COMP:9752"/>
        <dbReference type="Rhea" id="RHEA-COMP:9928"/>
        <dbReference type="ChEBI" id="CHEBI:15378"/>
        <dbReference type="ChEBI" id="CHEBI:29969"/>
        <dbReference type="ChEBI" id="CHEBI:64479"/>
        <dbReference type="ChEBI" id="CHEBI:78463"/>
        <dbReference type="ChEBI" id="CHEBI:78809"/>
        <dbReference type="EC" id="2.3.1.181"/>
    </reaction>
</comment>
<comment type="pathway">
    <text evidence="1">Protein modification; protein lipoylation via endogenous pathway; protein N(6)-(lipoyl)lysine from octanoyl-[acyl-carrier-protein]: step 1/2.</text>
</comment>
<comment type="subcellular location">
    <subcellularLocation>
        <location evidence="1">Cytoplasm</location>
    </subcellularLocation>
</comment>
<comment type="miscellaneous">
    <text evidence="1">In the reaction, the free carboxyl group of octanoic acid is attached via an amide linkage to the epsilon-amino group of a specific lysine residue of lipoyl domains of lipoate-dependent enzymes.</text>
</comment>
<comment type="similarity">
    <text evidence="1">Belongs to the LipB family.</text>
</comment>
<proteinExistence type="inferred from homology"/>
<gene>
    <name evidence="1" type="primary">lipB</name>
    <name type="ordered locus">LBL_1287</name>
</gene>
<accession>Q052G1</accession>
<dbReference type="EC" id="2.3.1.181" evidence="1"/>
<dbReference type="EMBL" id="CP000348">
    <property type="protein sequence ID" value="ABJ78784.1"/>
    <property type="molecule type" value="Genomic_DNA"/>
</dbReference>
<dbReference type="SMR" id="Q052G1"/>
<dbReference type="KEGG" id="lbl:LBL_1287"/>
<dbReference type="HOGENOM" id="CLU_035168_1_3_12"/>
<dbReference type="UniPathway" id="UPA00538">
    <property type="reaction ID" value="UER00592"/>
</dbReference>
<dbReference type="GO" id="GO:0005737">
    <property type="term" value="C:cytoplasm"/>
    <property type="evidence" value="ECO:0007669"/>
    <property type="project" value="UniProtKB-SubCell"/>
</dbReference>
<dbReference type="GO" id="GO:0033819">
    <property type="term" value="F:lipoyl(octanoyl) transferase activity"/>
    <property type="evidence" value="ECO:0007669"/>
    <property type="project" value="UniProtKB-EC"/>
</dbReference>
<dbReference type="GO" id="GO:0036211">
    <property type="term" value="P:protein modification process"/>
    <property type="evidence" value="ECO:0007669"/>
    <property type="project" value="InterPro"/>
</dbReference>
<dbReference type="CDD" id="cd16444">
    <property type="entry name" value="LipB"/>
    <property type="match status" value="1"/>
</dbReference>
<dbReference type="Gene3D" id="3.30.930.10">
    <property type="entry name" value="Bira Bifunctional Protein, Domain 2"/>
    <property type="match status" value="1"/>
</dbReference>
<dbReference type="HAMAP" id="MF_00013">
    <property type="entry name" value="LipB"/>
    <property type="match status" value="1"/>
</dbReference>
<dbReference type="InterPro" id="IPR045864">
    <property type="entry name" value="aa-tRNA-synth_II/BPL/LPL"/>
</dbReference>
<dbReference type="InterPro" id="IPR004143">
    <property type="entry name" value="BPL_LPL_catalytic"/>
</dbReference>
<dbReference type="InterPro" id="IPR000544">
    <property type="entry name" value="Octanoyltransferase"/>
</dbReference>
<dbReference type="InterPro" id="IPR020605">
    <property type="entry name" value="Octanoyltransferase_CS"/>
</dbReference>
<dbReference type="NCBIfam" id="TIGR00214">
    <property type="entry name" value="lipB"/>
    <property type="match status" value="1"/>
</dbReference>
<dbReference type="PANTHER" id="PTHR10993:SF7">
    <property type="entry name" value="LIPOYLTRANSFERASE 2, MITOCHONDRIAL-RELATED"/>
    <property type="match status" value="1"/>
</dbReference>
<dbReference type="PANTHER" id="PTHR10993">
    <property type="entry name" value="OCTANOYLTRANSFERASE"/>
    <property type="match status" value="1"/>
</dbReference>
<dbReference type="Pfam" id="PF21948">
    <property type="entry name" value="LplA-B_cat"/>
    <property type="match status" value="1"/>
</dbReference>
<dbReference type="PIRSF" id="PIRSF016262">
    <property type="entry name" value="LPLase"/>
    <property type="match status" value="1"/>
</dbReference>
<dbReference type="SUPFAM" id="SSF55681">
    <property type="entry name" value="Class II aaRS and biotin synthetases"/>
    <property type="match status" value="1"/>
</dbReference>
<dbReference type="PROSITE" id="PS51733">
    <property type="entry name" value="BPL_LPL_CATALYTIC"/>
    <property type="match status" value="1"/>
</dbReference>
<dbReference type="PROSITE" id="PS01313">
    <property type="entry name" value="LIPB"/>
    <property type="match status" value="1"/>
</dbReference>
<keyword id="KW-0012">Acyltransferase</keyword>
<keyword id="KW-0963">Cytoplasm</keyword>
<keyword id="KW-0808">Transferase</keyword>
<sequence length="219" mass="25185">MRMIRFRKKIPYLRYLEMQEKLRKFRRECILFLEHAPIITGGINYNPENLLLGKEFLESQGIQVHFVQRGGDFTAHEPGQLVIYPHVDLKKRNLPIRFYLENLLQSVIDSARTTWGLNLITDSDSPGLYLESNSSKKICSIGVNFKSFFTSHGVAFNLNNDFTAFRCINPCGRNWTDMTSVEKLGLDSGFAKRNQFISFMKANLNSFLGPISKLTHTVI</sequence>
<name>LIPB_LEPBL</name>
<evidence type="ECO:0000255" key="1">
    <source>
        <dbReference type="HAMAP-Rule" id="MF_00013"/>
    </source>
</evidence>
<evidence type="ECO:0000255" key="2">
    <source>
        <dbReference type="PROSITE-ProRule" id="PRU01067"/>
    </source>
</evidence>